<dbReference type="EC" id="3.1.1.5"/>
<dbReference type="EMBL" id="CH954180">
    <property type="protein sequence ID" value="EDV47524.1"/>
    <property type="molecule type" value="Genomic_DNA"/>
</dbReference>
<dbReference type="SMR" id="B3NY03"/>
<dbReference type="GeneID" id="6551558"/>
<dbReference type="KEGG" id="der:6551558"/>
<dbReference type="CTD" id="31716"/>
<dbReference type="eggNOG" id="KOG2968">
    <property type="taxonomic scope" value="Eukaryota"/>
</dbReference>
<dbReference type="HOGENOM" id="CLU_000960_1_0_1"/>
<dbReference type="OMA" id="GQQEDRH"/>
<dbReference type="OrthoDB" id="421051at2759"/>
<dbReference type="PhylomeDB" id="B3NY03"/>
<dbReference type="Proteomes" id="UP000008711">
    <property type="component" value="Unassembled WGS sequence"/>
</dbReference>
<dbReference type="GO" id="GO:0005789">
    <property type="term" value="C:endoplasmic reticulum membrane"/>
    <property type="evidence" value="ECO:0000250"/>
    <property type="project" value="UniProtKB"/>
</dbReference>
<dbReference type="GO" id="GO:0005886">
    <property type="term" value="C:plasma membrane"/>
    <property type="evidence" value="ECO:0007669"/>
    <property type="project" value="EnsemblMetazoa"/>
</dbReference>
<dbReference type="GO" id="GO:0004622">
    <property type="term" value="F:lysophospholipase activity"/>
    <property type="evidence" value="ECO:0000250"/>
    <property type="project" value="UniProtKB"/>
</dbReference>
<dbReference type="GO" id="GO:0034236">
    <property type="term" value="F:protein kinase A catalytic subunit binding"/>
    <property type="evidence" value="ECO:0007669"/>
    <property type="project" value="EnsemblMetazoa"/>
</dbReference>
<dbReference type="GO" id="GO:0007272">
    <property type="term" value="P:ensheathment of neurons"/>
    <property type="evidence" value="ECO:0007669"/>
    <property type="project" value="EnsemblMetazoa"/>
</dbReference>
<dbReference type="GO" id="GO:0034349">
    <property type="term" value="P:glial cell apoptotic process"/>
    <property type="evidence" value="ECO:0000250"/>
    <property type="project" value="UniProtKB"/>
</dbReference>
<dbReference type="GO" id="GO:0016042">
    <property type="term" value="P:lipid catabolic process"/>
    <property type="evidence" value="ECO:0007669"/>
    <property type="project" value="UniProtKB-KW"/>
</dbReference>
<dbReference type="GO" id="GO:0006643">
    <property type="term" value="P:membrane lipid metabolic process"/>
    <property type="evidence" value="ECO:0000250"/>
    <property type="project" value="UniProtKB"/>
</dbReference>
<dbReference type="GO" id="GO:0061024">
    <property type="term" value="P:membrane organization"/>
    <property type="evidence" value="ECO:0000250"/>
    <property type="project" value="UniProtKB"/>
</dbReference>
<dbReference type="GO" id="GO:0051402">
    <property type="term" value="P:neuron apoptotic process"/>
    <property type="evidence" value="ECO:0000250"/>
    <property type="project" value="UniProtKB"/>
</dbReference>
<dbReference type="GO" id="GO:0046470">
    <property type="term" value="P:phosphatidylcholine metabolic process"/>
    <property type="evidence" value="ECO:0000250"/>
    <property type="project" value="UniProtKB"/>
</dbReference>
<dbReference type="GO" id="GO:0045494">
    <property type="term" value="P:photoreceptor cell maintenance"/>
    <property type="evidence" value="ECO:0007669"/>
    <property type="project" value="EnsemblMetazoa"/>
</dbReference>
<dbReference type="GO" id="GO:0072657">
    <property type="term" value="P:protein localization to membrane"/>
    <property type="evidence" value="ECO:0007669"/>
    <property type="project" value="EnsemblMetazoa"/>
</dbReference>
<dbReference type="GO" id="GO:0007608">
    <property type="term" value="P:sensory perception of smell"/>
    <property type="evidence" value="ECO:0007669"/>
    <property type="project" value="EnsemblMetazoa"/>
</dbReference>
<dbReference type="CDD" id="cd00038">
    <property type="entry name" value="CAP_ED"/>
    <property type="match status" value="3"/>
</dbReference>
<dbReference type="CDD" id="cd07225">
    <property type="entry name" value="Pat_PNPLA6_PNPLA7"/>
    <property type="match status" value="1"/>
</dbReference>
<dbReference type="FunFam" id="2.60.120.10:FF:000010">
    <property type="entry name" value="neuropathy target esterase isoform X1"/>
    <property type="match status" value="1"/>
</dbReference>
<dbReference type="FunFam" id="2.60.120.10:FF:000122">
    <property type="entry name" value="Neuropathy target esterase sws"/>
    <property type="match status" value="1"/>
</dbReference>
<dbReference type="FunFam" id="2.60.120.10:FF:000135">
    <property type="entry name" value="Neuropathy target esterase sws"/>
    <property type="match status" value="1"/>
</dbReference>
<dbReference type="FunFam" id="3.40.1090.10:FF:000022">
    <property type="entry name" value="Neuropathy target esterase sws"/>
    <property type="match status" value="1"/>
</dbReference>
<dbReference type="FunFam" id="3.40.1090.10:FF:000033">
    <property type="entry name" value="Neuropathy target esterase sws"/>
    <property type="match status" value="1"/>
</dbReference>
<dbReference type="Gene3D" id="3.40.1090.10">
    <property type="entry name" value="Cytosolic phospholipase A2 catalytic domain"/>
    <property type="match status" value="2"/>
</dbReference>
<dbReference type="Gene3D" id="2.60.120.10">
    <property type="entry name" value="Jelly Rolls"/>
    <property type="match status" value="3"/>
</dbReference>
<dbReference type="InterPro" id="IPR016035">
    <property type="entry name" value="Acyl_Trfase/lysoPLipase"/>
</dbReference>
<dbReference type="InterPro" id="IPR000595">
    <property type="entry name" value="cNMP-bd_dom"/>
</dbReference>
<dbReference type="InterPro" id="IPR018490">
    <property type="entry name" value="cNMP-bd_dom_sf"/>
</dbReference>
<dbReference type="InterPro" id="IPR001423">
    <property type="entry name" value="LysoPLipase_patatin_CS"/>
</dbReference>
<dbReference type="InterPro" id="IPR050301">
    <property type="entry name" value="NTE"/>
</dbReference>
<dbReference type="InterPro" id="IPR056556">
    <property type="entry name" value="NTE1_P-loop_dom"/>
</dbReference>
<dbReference type="InterPro" id="IPR002641">
    <property type="entry name" value="PNPLA_dom"/>
</dbReference>
<dbReference type="InterPro" id="IPR014710">
    <property type="entry name" value="RmlC-like_jellyroll"/>
</dbReference>
<dbReference type="PANTHER" id="PTHR14226:SF29">
    <property type="entry name" value="NEUROPATHY TARGET ESTERASE SWS"/>
    <property type="match status" value="1"/>
</dbReference>
<dbReference type="PANTHER" id="PTHR14226">
    <property type="entry name" value="NEUROPATHY TARGET ESTERASE/SWISS CHEESE D.MELANOGASTER"/>
    <property type="match status" value="1"/>
</dbReference>
<dbReference type="Pfam" id="PF00027">
    <property type="entry name" value="cNMP_binding"/>
    <property type="match status" value="3"/>
</dbReference>
<dbReference type="Pfam" id="PF24179">
    <property type="entry name" value="NTE_Ploop"/>
    <property type="match status" value="1"/>
</dbReference>
<dbReference type="Pfam" id="PF01734">
    <property type="entry name" value="Patatin"/>
    <property type="match status" value="1"/>
</dbReference>
<dbReference type="SMART" id="SM00100">
    <property type="entry name" value="cNMP"/>
    <property type="match status" value="3"/>
</dbReference>
<dbReference type="SUPFAM" id="SSF51206">
    <property type="entry name" value="cAMP-binding domain-like"/>
    <property type="match status" value="3"/>
</dbReference>
<dbReference type="SUPFAM" id="SSF52151">
    <property type="entry name" value="FabD/lysophospholipase-like"/>
    <property type="match status" value="2"/>
</dbReference>
<dbReference type="PROSITE" id="PS50042">
    <property type="entry name" value="CNMP_BINDING_3"/>
    <property type="match status" value="3"/>
</dbReference>
<dbReference type="PROSITE" id="PS51635">
    <property type="entry name" value="PNPLA"/>
    <property type="match status" value="1"/>
</dbReference>
<dbReference type="PROSITE" id="PS01237">
    <property type="entry name" value="UPF0028"/>
    <property type="match status" value="1"/>
</dbReference>
<organism>
    <name type="scientific">Drosophila erecta</name>
    <name type="common">Fruit fly</name>
    <dbReference type="NCBI Taxonomy" id="7220"/>
    <lineage>
        <taxon>Eukaryota</taxon>
        <taxon>Metazoa</taxon>
        <taxon>Ecdysozoa</taxon>
        <taxon>Arthropoda</taxon>
        <taxon>Hexapoda</taxon>
        <taxon>Insecta</taxon>
        <taxon>Pterygota</taxon>
        <taxon>Neoptera</taxon>
        <taxon>Endopterygota</taxon>
        <taxon>Diptera</taxon>
        <taxon>Brachycera</taxon>
        <taxon>Muscomorpha</taxon>
        <taxon>Ephydroidea</taxon>
        <taxon>Drosophilidae</taxon>
        <taxon>Drosophila</taxon>
        <taxon>Sophophora</taxon>
    </lineage>
</organism>
<protein>
    <recommendedName>
        <fullName evidence="2">Neuropathy target esterase sws</fullName>
    </recommendedName>
    <alternativeName>
        <fullName evidence="2">Swiss cheese</fullName>
        <ecNumber>3.1.1.5</ecNumber>
    </alternativeName>
</protein>
<accession>B3NY03</accession>
<proteinExistence type="inferred from homology"/>
<evidence type="ECO:0000250" key="1"/>
<evidence type="ECO:0000250" key="2">
    <source>
        <dbReference type="UniProtKB" id="Q9U969"/>
    </source>
</evidence>
<evidence type="ECO:0000255" key="3"/>
<evidence type="ECO:0000255" key="4">
    <source>
        <dbReference type="PROSITE-ProRule" id="PRU01161"/>
    </source>
</evidence>
<evidence type="ECO:0000256" key="5">
    <source>
        <dbReference type="SAM" id="MobiDB-lite"/>
    </source>
</evidence>
<evidence type="ECO:0000312" key="6">
    <source>
        <dbReference type="EMBL" id="EDV47524.1"/>
    </source>
</evidence>
<sequence>MDVLEMLRASASGSYNTIFSEAWCQYVSKQITATMYMYCALGMMGVLFLAWFMYFKRMARLRLRDEIARSISAVTNSSGDLRGLRFRKRDKMLFYGRRMLRKMKNVSGQMYSSGKGYKRRAVMRFARRILQLRRDNMPLEMRTVEPPAEYLEETIEGSDRVPPDALYMLQSIRIFGHFEKPVFLRLCKHTQLLELMAGDYLFKITDPDDSVYIVQSGMINVYISNADGSTLSLKTVRKGESVTSLLSFIDVLSGNPSYYKTVTAKAIEKSVVIRLPMQAFEEVFQDNPDVMIRVIQVIMIRLQRVLFTALRNYLGLNAELVQNHMRYKSVSTMSGPINSQTSQSSRQTPNGPPMGISHPLNLMQSTASGTGSGSGSGVSVTVTRPPPSPSRHSREEHTLSDPNPNPDGSVHGTSNLFTEVHGDAPNADLFHQQQQSVGNLSTRRSSITQMTPDGSHSCPPAPGVTTSIDMRLVQSSAVESLRKELGLSEEDAHIIEPFVELRELEPNVTLITEGNADDVCVWFVMTGTLAVYQSNQDATRAKQDKSDMLIHFVHPGEIVGGLAMLTGEASAYTIRSRSNSRIAFIRRAAIYQIMRQRPRIVLDLGNGVVRRLSPLVRQCDYALDWIFLESGRAVYRQDESSDSTYIVLSGRMRSVITHPGGKKEIVGEYGKGDLVGIVEMITETSRTTTVMAVRDSELAKLPEGLFNAIKLRYPIVVTKLISFLSHRFLGSMQTRSGSGAPGAPVEANPVTHKYSTVALVPITDEVPLTPFTYELYHSLCAIGPVLRLTSDVVRKQLGPNIFEAANEYRLTSWLAQQEDRNIITLYQCDSSLSAWTQRCMRQADVILIVGLGDRSHLVGKFEREIDRLAMRTQKELVLLYPEATNAKPANTLSWLNARPWVTKHHHVLCVKRIFTRKSQYRINDLYSRVLLSEPNMHSDFSRLARWLTGNSIGLVLGGGGARGAAHIGMLKAIQEAGIPVDMVGGVSIGALMGALWCSERNITTVTQKAREWSKKMTKWFLQLLDLTYPITSMFSGREFNKTIHDTFGDVSIEDLWIPYFTLTTDITASCHRIHTNGSLWRYVRSSMSLSGYMPPLCDPKDGHLLLDGGYVNNLPGHLWRYCRASMSIAGVFPPFCDYRDGHLLLDGCYTNNVPADVMHNLGAAHIIAIDVGSQDDTDLTNYGDDLSGWWLLYKKWNPFTSPVKVPDLPDIQSRLAYVSCVRQLEEVKNSDYCEYIRPPIDKYKTLAFGSFDEIRDVGYVFGKNYFENMAKAGRLGRFNQWFNKEPPKRVNHASLNEYTFIDLAQIVCRLPETYAVNTADLFSEDEDCDGYISEPTTLNTDRRRIQVPRAGNSLSFSETEMDSDVELDLKLERKTDKSTQSSPPTSSRTSMRGKEEARHMDNWHWGAKHKNETGSGATEGIHTSTEQEQEHQQQQQQDQGVRAEQLVYKDEDKENRSSANNETKN</sequence>
<reference evidence="6" key="1">
    <citation type="journal article" date="2007" name="Nature">
        <title>Evolution of genes and genomes on the Drosophila phylogeny.</title>
        <authorList>
            <consortium name="Drosophila 12 genomes consortium"/>
        </authorList>
    </citation>
    <scope>NUCLEOTIDE SEQUENCE [LARGE SCALE GENOMIC DNA]</scope>
    <source>
        <strain evidence="6">Tucson 14021-0224.01</strain>
    </source>
</reference>
<comment type="function">
    <text evidence="2">Phospholipase B that deacylates intracellular phosphatidylcholine (PtdCho), generating glycerophosphocholine (GroPtdCho). This deacylation occurs at both sn-2 and sn-1 positions of PtdCho. Its specific chemical modification by certain organophosphorus (OP) compounds leads to distal axonopathy. Plays a role in the signaling mechanism between neurons and glia that regulates glia wrapping during development of the adult brain. Essential for membrane lipid homeostasis and cell survival in both neurons and glia of the adult brain (By similarity).</text>
</comment>
<comment type="catalytic activity">
    <reaction evidence="2">
        <text>a 1-acyl-sn-glycero-3-phosphocholine + H2O = sn-glycerol 3-phosphocholine + a fatty acid + H(+)</text>
        <dbReference type="Rhea" id="RHEA:15177"/>
        <dbReference type="ChEBI" id="CHEBI:15377"/>
        <dbReference type="ChEBI" id="CHEBI:15378"/>
        <dbReference type="ChEBI" id="CHEBI:16870"/>
        <dbReference type="ChEBI" id="CHEBI:28868"/>
        <dbReference type="ChEBI" id="CHEBI:58168"/>
        <dbReference type="EC" id="3.1.1.5"/>
    </reaction>
</comment>
<comment type="subunit">
    <text evidence="1">Interacts with Pka-C3; interaction inhibits the catalytic function of Pka-C3 and the esterase activity of sws.</text>
</comment>
<comment type="subcellular location">
    <subcellularLocation>
        <location evidence="2">Endoplasmic reticulum membrane</location>
        <topology evidence="2">Single-pass type I membrane protein</topology>
    </subcellularLocation>
    <text evidence="2">Sws tethers Pka-C3 to the membrane.</text>
</comment>
<comment type="similarity">
    <text evidence="3">Belongs to the NTE family.</text>
</comment>
<feature type="chain" id="PRO_0000389221" description="Neuropathy target esterase sws">
    <location>
        <begin position="1"/>
        <end position="1465"/>
    </location>
</feature>
<feature type="topological domain" description="Lumenal" evidence="3">
    <location>
        <begin position="1"/>
        <end position="34"/>
    </location>
</feature>
<feature type="transmembrane region" description="Helical" evidence="3">
    <location>
        <begin position="35"/>
        <end position="55"/>
    </location>
</feature>
<feature type="topological domain" description="Cytoplasmic" evidence="3">
    <location>
        <begin position="56"/>
        <end position="1465"/>
    </location>
</feature>
<feature type="domain" description="PNPLA" evidence="4">
    <location>
        <begin position="954"/>
        <end position="1120"/>
    </location>
</feature>
<feature type="region of interest" description="Disordered" evidence="5">
    <location>
        <begin position="331"/>
        <end position="421"/>
    </location>
</feature>
<feature type="region of interest" description="Disordered" evidence="5">
    <location>
        <begin position="434"/>
        <end position="460"/>
    </location>
</feature>
<feature type="region of interest" description="Disordered" evidence="5">
    <location>
        <begin position="1371"/>
        <end position="1465"/>
    </location>
</feature>
<feature type="short sequence motif" description="GXGXXG" evidence="4">
    <location>
        <begin position="958"/>
        <end position="963"/>
    </location>
</feature>
<feature type="short sequence motif" description="GXSXG" evidence="4">
    <location>
        <begin position="985"/>
        <end position="989"/>
    </location>
</feature>
<feature type="short sequence motif" description="DGA/G" evidence="4">
    <location>
        <begin position="1107"/>
        <end position="1109"/>
    </location>
</feature>
<feature type="compositionally biased region" description="Polar residues" evidence="5">
    <location>
        <begin position="331"/>
        <end position="349"/>
    </location>
</feature>
<feature type="compositionally biased region" description="Polar residues" evidence="5">
    <location>
        <begin position="434"/>
        <end position="454"/>
    </location>
</feature>
<feature type="compositionally biased region" description="Low complexity" evidence="5">
    <location>
        <begin position="1378"/>
        <end position="1390"/>
    </location>
</feature>
<feature type="compositionally biased region" description="Basic and acidic residues" evidence="5">
    <location>
        <begin position="1392"/>
        <end position="1402"/>
    </location>
</feature>
<feature type="compositionally biased region" description="Polar residues" evidence="5">
    <location>
        <begin position="1413"/>
        <end position="1424"/>
    </location>
</feature>
<feature type="compositionally biased region" description="Basic and acidic residues" evidence="5">
    <location>
        <begin position="1447"/>
        <end position="1456"/>
    </location>
</feature>
<feature type="active site" description="Nucleophile" evidence="4">
    <location>
        <position position="987"/>
    </location>
</feature>
<feature type="active site" description="Proton acceptor" evidence="4">
    <location>
        <position position="1107"/>
    </location>
</feature>
<feature type="binding site" evidence="3">
    <location>
        <begin position="174"/>
        <end position="301"/>
    </location>
    <ligand>
        <name>a nucleoside 3',5'-cyclic phosphate</name>
        <dbReference type="ChEBI" id="CHEBI:58464"/>
        <label>1</label>
    </ligand>
</feature>
<feature type="binding site" evidence="3">
    <location>
        <begin position="484"/>
        <end position="611"/>
    </location>
    <ligand>
        <name>a nucleoside 3',5'-cyclic phosphate</name>
        <dbReference type="ChEBI" id="CHEBI:58464"/>
        <label>2</label>
    </ligand>
</feature>
<feature type="binding site" evidence="3">
    <location>
        <begin position="600"/>
        <end position="727"/>
    </location>
    <ligand>
        <name>a nucleoside 3',5'-cyclic phosphate</name>
        <dbReference type="ChEBI" id="CHEBI:58464"/>
        <label>3</label>
    </ligand>
</feature>
<feature type="modified residue" description="Phosphoserine" evidence="2">
    <location>
        <position position="446"/>
    </location>
</feature>
<feature type="modified residue" description="Phosphoserine" evidence="2">
    <location>
        <position position="455"/>
    </location>
</feature>
<feature type="modified residue" description="Phosphoserine" evidence="2">
    <location>
        <position position="1201"/>
    </location>
</feature>
<gene>
    <name evidence="2" type="primary">sws</name>
    <name type="ORF">GG17592</name>
</gene>
<name>SWS_DROER</name>
<keyword id="KW-0217">Developmental protein</keyword>
<keyword id="KW-0256">Endoplasmic reticulum</keyword>
<keyword id="KW-0378">Hydrolase</keyword>
<keyword id="KW-0442">Lipid degradation</keyword>
<keyword id="KW-0443">Lipid metabolism</keyword>
<keyword id="KW-0472">Membrane</keyword>
<keyword id="KW-0524">Neurogenesis</keyword>
<keyword id="KW-0597">Phosphoprotein</keyword>
<keyword id="KW-0812">Transmembrane</keyword>
<keyword id="KW-1133">Transmembrane helix</keyword>